<gene>
    <name type="primary">snd1</name>
    <name type="synonym">sn4tdr</name>
</gene>
<accession>Q7ZT42</accession>
<accession>Q6DEI2</accession>
<accession>Q7SX79</accession>
<accession>Q7ZZS7</accession>
<accession>Q8AXL0</accession>
<dbReference type="EMBL" id="AY272050">
    <property type="protein sequence ID" value="AAP23062.1"/>
    <property type="status" value="ALT_INIT"/>
    <property type="molecule type" value="mRNA"/>
</dbReference>
<dbReference type="EMBL" id="AF422806">
    <property type="protein sequence ID" value="AAN76663.2"/>
    <property type="status" value="ALT_INIT"/>
    <property type="molecule type" value="mRNA"/>
</dbReference>
<dbReference type="EMBL" id="AB098074">
    <property type="protein sequence ID" value="BAC56985.1"/>
    <property type="molecule type" value="mRNA"/>
</dbReference>
<dbReference type="EMBL" id="AB110096">
    <property type="protein sequence ID" value="BAC76712.1"/>
    <property type="molecule type" value="mRNA"/>
</dbReference>
<dbReference type="EMBL" id="AB110096">
    <property type="protein sequence ID" value="BAC76713.1"/>
    <property type="status" value="ALT_INIT"/>
    <property type="molecule type" value="mRNA"/>
</dbReference>
<dbReference type="EMBL" id="AB110445">
    <property type="protein sequence ID" value="BAC76779.1"/>
    <property type="status" value="ALT_INIT"/>
    <property type="molecule type" value="mRNA"/>
</dbReference>
<dbReference type="EMBL" id="BC077133">
    <property type="protein sequence ID" value="AAH77133.1"/>
    <property type="status" value="ALT_INIT"/>
    <property type="molecule type" value="mRNA"/>
</dbReference>
<dbReference type="RefSeq" id="NP_001280610.1">
    <molecule id="Q7ZT42-3"/>
    <property type="nucleotide sequence ID" value="NM_001293681.1"/>
</dbReference>
<dbReference type="SMR" id="Q7ZT42"/>
<dbReference type="FunCoup" id="Q7ZT42">
    <property type="interactions" value="3093"/>
</dbReference>
<dbReference type="STRING" id="7955.ENSDARP00000040404"/>
<dbReference type="PaxDb" id="7955-ENSDARP00000040404"/>
<dbReference type="PeptideAtlas" id="Q7ZT42"/>
<dbReference type="GeneID" id="324404"/>
<dbReference type="KEGG" id="dre:324404"/>
<dbReference type="AGR" id="ZFIN:ZDB-GENE-030131-3124"/>
<dbReference type="CTD" id="27044"/>
<dbReference type="ZFIN" id="ZDB-GENE-030131-3124">
    <property type="gene designation" value="snd1"/>
</dbReference>
<dbReference type="eggNOG" id="KOG2039">
    <property type="taxonomic scope" value="Eukaryota"/>
</dbReference>
<dbReference type="HOGENOM" id="CLU_005966_2_0_1"/>
<dbReference type="InParanoid" id="Q7ZT42"/>
<dbReference type="OrthoDB" id="10023235at2759"/>
<dbReference type="PRO" id="PR:Q7ZT42"/>
<dbReference type="Proteomes" id="UP000000437">
    <property type="component" value="Chromosome 4"/>
</dbReference>
<dbReference type="Bgee" id="ENSDARG00000006766">
    <property type="expression patterns" value="Expressed in intestine and 30 other cell types or tissues"/>
</dbReference>
<dbReference type="ExpressionAtlas" id="Q7ZT42">
    <property type="expression patterns" value="baseline and differential"/>
</dbReference>
<dbReference type="GO" id="GO:0005737">
    <property type="term" value="C:cytoplasm"/>
    <property type="evidence" value="ECO:0000314"/>
    <property type="project" value="ZFIN"/>
</dbReference>
<dbReference type="GO" id="GO:0005829">
    <property type="term" value="C:cytosol"/>
    <property type="evidence" value="ECO:0000318"/>
    <property type="project" value="GO_Central"/>
</dbReference>
<dbReference type="GO" id="GO:0005634">
    <property type="term" value="C:nucleus"/>
    <property type="evidence" value="ECO:0000318"/>
    <property type="project" value="GO_Central"/>
</dbReference>
<dbReference type="GO" id="GO:0031332">
    <property type="term" value="C:RNAi effector complex"/>
    <property type="evidence" value="ECO:0007669"/>
    <property type="project" value="InterPro"/>
</dbReference>
<dbReference type="GO" id="GO:0004518">
    <property type="term" value="F:nuclease activity"/>
    <property type="evidence" value="ECO:0000318"/>
    <property type="project" value="GO_Central"/>
</dbReference>
<dbReference type="GO" id="GO:0003723">
    <property type="term" value="F:RNA binding"/>
    <property type="evidence" value="ECO:0000318"/>
    <property type="project" value="GO_Central"/>
</dbReference>
<dbReference type="GO" id="GO:0006402">
    <property type="term" value="P:mRNA catabolic process"/>
    <property type="evidence" value="ECO:0000318"/>
    <property type="project" value="GO_Central"/>
</dbReference>
<dbReference type="GO" id="GO:0031047">
    <property type="term" value="P:regulatory ncRNA-mediated gene silencing"/>
    <property type="evidence" value="ECO:0007669"/>
    <property type="project" value="InterPro"/>
</dbReference>
<dbReference type="CDD" id="cd00175">
    <property type="entry name" value="SNc"/>
    <property type="match status" value="4"/>
</dbReference>
<dbReference type="CDD" id="cd20433">
    <property type="entry name" value="Tudor_TDRD11"/>
    <property type="match status" value="1"/>
</dbReference>
<dbReference type="FunFam" id="2.30.30.140:FF:000047">
    <property type="entry name" value="Staphylococcal nuclease domain-containing protein"/>
    <property type="match status" value="1"/>
</dbReference>
<dbReference type="FunFam" id="2.40.50.90:FF:000001">
    <property type="entry name" value="Staphylococcal nuclease domain-containing protein"/>
    <property type="match status" value="1"/>
</dbReference>
<dbReference type="FunFam" id="2.40.50.90:FF:000002">
    <property type="entry name" value="Staphylococcal nuclease domain-containing protein"/>
    <property type="match status" value="1"/>
</dbReference>
<dbReference type="FunFam" id="2.40.50.90:FF:000003">
    <property type="entry name" value="Staphylococcal nuclease domain-containing protein"/>
    <property type="match status" value="1"/>
</dbReference>
<dbReference type="FunFam" id="2.40.50.90:FF:000004">
    <property type="entry name" value="Staphylococcal nuclease domain-containing protein"/>
    <property type="match status" value="1"/>
</dbReference>
<dbReference type="FunFam" id="2.40.50.90:FF:000005">
    <property type="entry name" value="Staphylococcal nuclease domain-containing protein"/>
    <property type="match status" value="1"/>
</dbReference>
<dbReference type="Gene3D" id="2.30.30.140">
    <property type="match status" value="1"/>
</dbReference>
<dbReference type="Gene3D" id="2.40.50.90">
    <property type="match status" value="5"/>
</dbReference>
<dbReference type="InterPro" id="IPR016685">
    <property type="entry name" value="Silence_cplx_Nase-comp_TudorSN"/>
</dbReference>
<dbReference type="InterPro" id="IPR035437">
    <property type="entry name" value="SNase_OB-fold_sf"/>
</dbReference>
<dbReference type="InterPro" id="IPR016071">
    <property type="entry name" value="Staphylococal_nuclease_OB-fold"/>
</dbReference>
<dbReference type="InterPro" id="IPR002071">
    <property type="entry name" value="Thermonucl_AS"/>
</dbReference>
<dbReference type="InterPro" id="IPR002999">
    <property type="entry name" value="Tudor"/>
</dbReference>
<dbReference type="InterPro" id="IPR047386">
    <property type="entry name" value="Tudor_TDRD11"/>
</dbReference>
<dbReference type="PANTHER" id="PTHR12302">
    <property type="entry name" value="EBNA2 BINDING PROTEIN P100"/>
    <property type="match status" value="1"/>
</dbReference>
<dbReference type="PANTHER" id="PTHR12302:SF2">
    <property type="entry name" value="STAPHYLOCOCCAL NUCLEASE DOMAIN-CONTAINING PROTEIN 1"/>
    <property type="match status" value="1"/>
</dbReference>
<dbReference type="Pfam" id="PF00565">
    <property type="entry name" value="SNase"/>
    <property type="match status" value="5"/>
</dbReference>
<dbReference type="Pfam" id="PF00567">
    <property type="entry name" value="TUDOR"/>
    <property type="match status" value="1"/>
</dbReference>
<dbReference type="PIRSF" id="PIRSF017179">
    <property type="entry name" value="RISC-Tudor-SN"/>
    <property type="match status" value="1"/>
</dbReference>
<dbReference type="SMART" id="SM00318">
    <property type="entry name" value="SNc"/>
    <property type="match status" value="4"/>
</dbReference>
<dbReference type="SMART" id="SM00333">
    <property type="entry name" value="TUDOR"/>
    <property type="match status" value="1"/>
</dbReference>
<dbReference type="SUPFAM" id="SSF50199">
    <property type="entry name" value="Staphylococcal nuclease"/>
    <property type="match status" value="5"/>
</dbReference>
<dbReference type="SUPFAM" id="SSF63748">
    <property type="entry name" value="Tudor/PWWP/MBT"/>
    <property type="match status" value="1"/>
</dbReference>
<dbReference type="PROSITE" id="PS01284">
    <property type="entry name" value="TNASE_2"/>
    <property type="match status" value="1"/>
</dbReference>
<dbReference type="PROSITE" id="PS50830">
    <property type="entry name" value="TNASE_3"/>
    <property type="match status" value="4"/>
</dbReference>
<dbReference type="PROSITE" id="PS50304">
    <property type="entry name" value="TUDOR"/>
    <property type="match status" value="1"/>
</dbReference>
<reference key="1">
    <citation type="journal article" date="2003" name="FEBS Lett.">
        <title>Two variants of zebrafish p100 are expressed during embryogenesis and regulated by Nodal signaling.</title>
        <authorList>
            <person name="Zhao C.T."/>
            <person name="Shi K.H."/>
            <person name="Su Y."/>
            <person name="Liang L.Y."/>
            <person name="Yan Y."/>
            <person name="Postlethwait J."/>
            <person name="Meng A.M."/>
        </authorList>
    </citation>
    <scope>NUCLEOTIDE SEQUENCE [MRNA] (ISOFORMS 2 AND 3)</scope>
    <scope>SUBCELLULAR LOCATION</scope>
    <scope>DEVELOPMENTAL STAGE</scope>
</reference>
<reference key="2">
    <citation type="submission" date="2003-05" db="EMBL/GenBank/DDBJ databases">
        <title>Danio rerio full mRNA for 4SNc-Tudor domain protein, complete cds.</title>
        <authorList>
            <person name="Abe S."/>
            <person name="Wang P."/>
        </authorList>
    </citation>
    <scope>NUCLEOTIDE SEQUENCE [MRNA] (ISOFORM 1)</scope>
</reference>
<reference key="3">
    <citation type="submission" date="2004-07" db="EMBL/GenBank/DDBJ databases">
        <authorList>
            <consortium name="NIH - Zebrafish Gene Collection (ZGC) project"/>
        </authorList>
    </citation>
    <scope>NUCLEOTIDE SEQUENCE [LARGE SCALE MRNA] (ISOFORM 2)</scope>
    <source>
        <tissue>Embryo</tissue>
    </source>
</reference>
<evidence type="ECO:0000255" key="1">
    <source>
        <dbReference type="PROSITE-ProRule" id="PRU00211"/>
    </source>
</evidence>
<evidence type="ECO:0000255" key="2">
    <source>
        <dbReference type="PROSITE-ProRule" id="PRU00272"/>
    </source>
</evidence>
<evidence type="ECO:0000269" key="3">
    <source>
    </source>
</evidence>
<evidence type="ECO:0000303" key="4">
    <source>
    </source>
</evidence>
<evidence type="ECO:0000303" key="5">
    <source ref="3"/>
</evidence>
<evidence type="ECO:0000305" key="6"/>
<keyword id="KW-0025">Alternative splicing</keyword>
<keyword id="KW-0963">Cytoplasm</keyword>
<keyword id="KW-1185">Reference proteome</keyword>
<keyword id="KW-0677">Repeat</keyword>
<name>SND1_DANRE</name>
<proteinExistence type="evidence at transcript level"/>
<protein>
    <recommendedName>
        <fullName>Staphylococcal nuclease domain-containing protein 1</fullName>
    </recommendedName>
    <alternativeName>
        <fullName>100 kDa coactivator</fullName>
    </alternativeName>
    <alternativeName>
        <fullName>4SNc-Tudor domain protein</fullName>
    </alternativeName>
    <alternativeName>
        <fullName>p100 co-activator</fullName>
    </alternativeName>
</protein>
<organism>
    <name type="scientific">Danio rerio</name>
    <name type="common">Zebrafish</name>
    <name type="synonym">Brachydanio rerio</name>
    <dbReference type="NCBI Taxonomy" id="7955"/>
    <lineage>
        <taxon>Eukaryota</taxon>
        <taxon>Metazoa</taxon>
        <taxon>Chordata</taxon>
        <taxon>Craniata</taxon>
        <taxon>Vertebrata</taxon>
        <taxon>Euteleostomi</taxon>
        <taxon>Actinopterygii</taxon>
        <taxon>Neopterygii</taxon>
        <taxon>Teleostei</taxon>
        <taxon>Ostariophysi</taxon>
        <taxon>Cypriniformes</taxon>
        <taxon>Danionidae</taxon>
        <taxon>Danioninae</taxon>
        <taxon>Danio</taxon>
    </lineage>
</organism>
<comment type="subcellular location">
    <subcellularLocation>
        <location evidence="3">Cytoplasm</location>
    </subcellularLocation>
</comment>
<comment type="alternative products">
    <event type="alternative splicing"/>
    <isoform>
        <id>Q7ZT42-1</id>
        <name>1</name>
        <sequence type="displayed"/>
    </isoform>
    <isoform>
        <id>Q7ZT42-2</id>
        <name>2</name>
        <sequence type="described" ref="VSP_012670"/>
    </isoform>
    <isoform>
        <id>Q7ZT42-3</id>
        <name>3</name>
        <sequence type="described" ref="VSP_012671 VSP_012669"/>
    </isoform>
</comment>
<comment type="developmental stage">
    <text evidence="3">During the blastula period expressed in all blastomeres. At the onset of gastrulation, expressed more in the embryonic shield than in other regions. As embryos elongate, expression in the shield migrates toward the animal pole and forms a longitudinal band in the dorsal midline. At late gastrulation, expressed in the dorsal midline extending from the tailbud to the animal pole. Expression is under the control of Nodal signals.</text>
</comment>
<comment type="sequence caution" evidence="6">
    <conflict type="erroneous initiation">
        <sequence resource="EMBL-CDS" id="AAH77133"/>
    </conflict>
</comment>
<comment type="sequence caution" evidence="6">
    <conflict type="erroneous initiation">
        <sequence resource="EMBL-CDS" id="AAN76663"/>
    </conflict>
</comment>
<comment type="sequence caution" evidence="6">
    <conflict type="erroneous initiation">
        <sequence resource="EMBL-CDS" id="AAP23062"/>
    </conflict>
</comment>
<comment type="sequence caution" evidence="6">
    <conflict type="erroneous initiation">
        <sequence resource="EMBL-CDS" id="BAC76713"/>
    </conflict>
</comment>
<comment type="sequence caution" evidence="6">
    <conflict type="erroneous initiation">
        <sequence resource="EMBL-CDS" id="BAC76779"/>
    </conflict>
</comment>
<feature type="chain" id="PRO_0000183183" description="Staphylococcal nuclease domain-containing protein 1">
    <location>
        <begin position="1"/>
        <end position="897"/>
    </location>
</feature>
<feature type="domain" description="TNase-like 1" evidence="2">
    <location>
        <begin position="18"/>
        <end position="167"/>
    </location>
</feature>
<feature type="domain" description="TNase-like 2" evidence="2">
    <location>
        <begin position="194"/>
        <end position="329"/>
    </location>
</feature>
<feature type="domain" description="TNase-like 3" evidence="2">
    <location>
        <begin position="342"/>
        <end position="499"/>
    </location>
</feature>
<feature type="domain" description="TNase-like 4" evidence="2">
    <location>
        <begin position="528"/>
        <end position="663"/>
    </location>
</feature>
<feature type="domain" description="Tudor" evidence="1">
    <location>
        <begin position="732"/>
        <end position="790"/>
    </location>
</feature>
<feature type="splice variant" id="VSP_012671" description="In isoform 3." evidence="4">
    <original>IECPRGSRNMPGGM</original>
    <variation>KCQPASACQLYHHL</variation>
    <location>
        <begin position="561"/>
        <end position="574"/>
    </location>
</feature>
<feature type="splice variant" id="VSP_012669" description="In isoform 3." evidence="4">
    <location>
        <begin position="575"/>
        <end position="897"/>
    </location>
</feature>
<feature type="splice variant" id="VSP_012670" description="In isoform 2." evidence="4 5">
    <original>R</original>
    <variation>RYGDFRDDDADEFGYRR</variation>
    <location>
        <position position="897"/>
    </location>
</feature>
<feature type="sequence conflict" description="In Ref. 1; AAP23062 and 3; AAH77133." evidence="6" ref="1 3">
    <original>I</original>
    <variation>K</variation>
    <location>
        <position position="606"/>
    </location>
</feature>
<feature type="sequence conflict" description="In Ref. 1; AAP23062 and 3; AAH77133." evidence="6" ref="1 3">
    <original>D</original>
    <variation>G</variation>
    <location>
        <position position="612"/>
    </location>
</feature>
<feature type="sequence conflict" description="In Ref. 1; AAP23062 and 3; AAH77133." evidence="6" ref="1 3">
    <original>D</original>
    <variation>E</variation>
    <location>
        <position position="617"/>
    </location>
</feature>
<feature type="sequence conflict" description="In Ref. 3; AAH77133." evidence="6" ref="3">
    <original>Y</original>
    <variation>C</variation>
    <location>
        <position position="643"/>
    </location>
</feature>
<feature type="sequence conflict" description="In Ref. 1; AAP23062 and 3; AAH77133." evidence="6" ref="1 3">
    <original>N</original>
    <variation>K</variation>
    <location>
        <position position="669"/>
    </location>
</feature>
<feature type="sequence conflict" description="In Ref. 1; AAP23062 and 3." evidence="6" ref="1 3">
    <original>GRNTDPSTSL</original>
    <variation>VAKYRSVYVT</variation>
    <location>
        <begin position="682"/>
        <end position="691"/>
    </location>
</feature>
<feature type="sequence conflict" description="In Ref. 1; AAP23062." evidence="6" ref="1">
    <original>V</original>
    <variation>F</variation>
    <location>
        <position position="753"/>
    </location>
</feature>
<feature type="sequence conflict" description="In Ref. 1; AAP23062 and 3; AAH77133." evidence="6" ref="1 3">
    <original>M</original>
    <variation>S</variation>
    <location>
        <position position="838"/>
    </location>
</feature>
<sequence length="897" mass="100535">MASAVPAQVQSSQASAPQLQRGIVKMVLSGCAIIVRGQPRGGPPPERQINLSNIRAGALARRAIQGQPDTKDTPDEPWAFQAREFMRKKVIGKEVCFTVENKTPQGREYGMVYLGKDTSGENIAESLVAEGLAMVRREGIRGNNPEQVRLCDLEDQAKSSKKGLWSEGGGSHTIRDLKYTIENPRNFVDSLHQKPVNAIIEHVRDGCMVRALLLPDYYLVTVMLSGIKSPTFKREADGSETPEPFAAEAKFFTESRLLQRDVQIILESCPNQVILGTILHPNGNITELLLKEGFARCVDWSMAVYTQGAEKLRAAERSAKERKVRIWKDYVAPTANLDQKDRQFVAKVMQVVNADAIVVKLNSGEYKTIHLSSIRPPRLEGEEKNKDKDKRFRPLYDIPYMFEAREFLRKKLIGKKVNVTVDYIRAATNAMEMGVPAFPERTCATVTIGGINIAEALVSKGLATVIRYRQDDDQRSSHYDELLAAEARAIKNGKGLHSKKEVPIHRVADISGETQKAKQFFPFLQRAGRSEAVVEYVFSGSRLKLYMPKETCLITFLLAGIECPRGSRNMPGGMQVAEPYSEEAMLFTKELVLQREVEVEVESMDIAGNFIDWLHIDGVNLSVALVENALSKVHFTAERSSYYKTLVSAEESARQRKEKLWANYEEKPNEEVAQVTEAKERGRNTDPSTSLEITDGLHFYAQDVETGTKLENLMESMRGEIAAQPPVEGSFAPRRGEFCIAKFADGEWYRARVEKVESPAKVHVFYIDYGNREVLSSTRLAALPPAFSTRTLPPQATEYAFAYIQVPQDEDARADAVDSVVRDIHNTQCLLNVEYSGMVCPQVTLQFADTKEDVGLGLVKEGMVMVDIRKEKYLQKMVTEYLNAQESAKSARLNIWR</sequence>